<evidence type="ECO:0000255" key="1">
    <source>
        <dbReference type="HAMAP-Rule" id="MF_01580"/>
    </source>
</evidence>
<evidence type="ECO:0000305" key="2"/>
<protein>
    <recommendedName>
        <fullName evidence="1">Cell division activator CedA</fullName>
    </recommendedName>
</protein>
<dbReference type="EMBL" id="AE005174">
    <property type="protein sequence ID" value="AAG56717.1"/>
    <property type="status" value="ALT_INIT"/>
    <property type="molecule type" value="Genomic_DNA"/>
</dbReference>
<dbReference type="EMBL" id="BA000007">
    <property type="protein sequence ID" value="BAB35860.1"/>
    <property type="status" value="ALT_INIT"/>
    <property type="molecule type" value="Genomic_DNA"/>
</dbReference>
<dbReference type="PIR" id="A85782">
    <property type="entry name" value="A85782"/>
</dbReference>
<dbReference type="PIR" id="E90933">
    <property type="entry name" value="E90933"/>
</dbReference>
<dbReference type="RefSeq" id="NP_310464.1">
    <property type="nucleotide sequence ID" value="NC_002695.1"/>
</dbReference>
<dbReference type="SMR" id="P0AE61"/>
<dbReference type="STRING" id="155864.Z2760"/>
<dbReference type="GeneID" id="915364"/>
<dbReference type="KEGG" id="ece:Z2760"/>
<dbReference type="KEGG" id="ecs:ECs_2437"/>
<dbReference type="PATRIC" id="fig|386585.9.peg.2551"/>
<dbReference type="eggNOG" id="ENOG5032S26">
    <property type="taxonomic scope" value="Bacteria"/>
</dbReference>
<dbReference type="HOGENOM" id="CLU_167445_0_0_6"/>
<dbReference type="OMA" id="HAIKMDA"/>
<dbReference type="Proteomes" id="UP000000558">
    <property type="component" value="Chromosome"/>
</dbReference>
<dbReference type="Proteomes" id="UP000002519">
    <property type="component" value="Chromosome"/>
</dbReference>
<dbReference type="GO" id="GO:0003677">
    <property type="term" value="F:DNA binding"/>
    <property type="evidence" value="ECO:0007669"/>
    <property type="project" value="UniProtKB-UniRule"/>
</dbReference>
<dbReference type="GO" id="GO:0051301">
    <property type="term" value="P:cell division"/>
    <property type="evidence" value="ECO:0007669"/>
    <property type="project" value="UniProtKB-UniRule"/>
</dbReference>
<dbReference type="FunFam" id="3.30.730.20:FF:000001">
    <property type="entry name" value="Cell division activator CedA"/>
    <property type="match status" value="1"/>
</dbReference>
<dbReference type="Gene3D" id="3.30.730.20">
    <property type="entry name" value="Cell division activator CedA"/>
    <property type="match status" value="1"/>
</dbReference>
<dbReference type="HAMAP" id="MF_01580">
    <property type="entry name" value="CedA"/>
    <property type="match status" value="1"/>
</dbReference>
<dbReference type="InterPro" id="IPR038463">
    <property type="entry name" value="CedA-like_sf"/>
</dbReference>
<dbReference type="InterPro" id="IPR019666">
    <property type="entry name" value="Cell_div_activator_CedA"/>
</dbReference>
<dbReference type="NCBIfam" id="NF007510">
    <property type="entry name" value="PRK10113.1"/>
    <property type="match status" value="1"/>
</dbReference>
<dbReference type="Pfam" id="PF10729">
    <property type="entry name" value="CedA"/>
    <property type="match status" value="1"/>
</dbReference>
<feature type="chain" id="PRO_0000089472" description="Cell division activator CedA">
    <location>
        <begin position="1"/>
        <end position="80"/>
    </location>
</feature>
<keyword id="KW-0131">Cell cycle</keyword>
<keyword id="KW-0132">Cell division</keyword>
<keyword id="KW-0238">DNA-binding</keyword>
<keyword id="KW-1185">Reference proteome</keyword>
<reference key="1">
    <citation type="journal article" date="2001" name="Nature">
        <title>Genome sequence of enterohaemorrhagic Escherichia coli O157:H7.</title>
        <authorList>
            <person name="Perna N.T."/>
            <person name="Plunkett G. III"/>
            <person name="Burland V."/>
            <person name="Mau B."/>
            <person name="Glasner J.D."/>
            <person name="Rose D.J."/>
            <person name="Mayhew G.F."/>
            <person name="Evans P.S."/>
            <person name="Gregor J."/>
            <person name="Kirkpatrick H.A."/>
            <person name="Posfai G."/>
            <person name="Hackett J."/>
            <person name="Klink S."/>
            <person name="Boutin A."/>
            <person name="Shao Y."/>
            <person name="Miller L."/>
            <person name="Grotbeck E.J."/>
            <person name="Davis N.W."/>
            <person name="Lim A."/>
            <person name="Dimalanta E.T."/>
            <person name="Potamousis K."/>
            <person name="Apodaca J."/>
            <person name="Anantharaman T.S."/>
            <person name="Lin J."/>
            <person name="Yen G."/>
            <person name="Schwartz D.C."/>
            <person name="Welch R.A."/>
            <person name="Blattner F.R."/>
        </authorList>
    </citation>
    <scope>NUCLEOTIDE SEQUENCE [LARGE SCALE GENOMIC DNA]</scope>
    <source>
        <strain>O157:H7 / EDL933 / ATCC 700927 / EHEC</strain>
    </source>
</reference>
<reference key="2">
    <citation type="journal article" date="2001" name="DNA Res.">
        <title>Complete genome sequence of enterohemorrhagic Escherichia coli O157:H7 and genomic comparison with a laboratory strain K-12.</title>
        <authorList>
            <person name="Hayashi T."/>
            <person name="Makino K."/>
            <person name="Ohnishi M."/>
            <person name="Kurokawa K."/>
            <person name="Ishii K."/>
            <person name="Yokoyama K."/>
            <person name="Han C.-G."/>
            <person name="Ohtsubo E."/>
            <person name="Nakayama K."/>
            <person name="Murata T."/>
            <person name="Tanaka M."/>
            <person name="Tobe T."/>
            <person name="Iida T."/>
            <person name="Takami H."/>
            <person name="Honda T."/>
            <person name="Sasakawa C."/>
            <person name="Ogasawara N."/>
            <person name="Yasunaga T."/>
            <person name="Kuhara S."/>
            <person name="Shiba T."/>
            <person name="Hattori M."/>
            <person name="Shinagawa H."/>
        </authorList>
    </citation>
    <scope>NUCLEOTIDE SEQUENCE [LARGE SCALE GENOMIC DNA]</scope>
    <source>
        <strain>O157:H7 / Sakai / RIMD 0509952 / EHEC</strain>
    </source>
</reference>
<gene>
    <name evidence="1" type="primary">cedA</name>
    <name type="ordered locus">Z2760</name>
    <name type="ordered locus">ECs2437</name>
</gene>
<accession>P0AE61</accession>
<accession>P76211</accession>
<sequence length="80" mass="9377">MKKPLRQQNRQIISYVPRTEPAPPEHAIKMDSFRDVWMLRGKYVAFVLMGESFLRSPAFTVPESAQRWANQIRQEGEVTE</sequence>
<organism>
    <name type="scientific">Escherichia coli O157:H7</name>
    <dbReference type="NCBI Taxonomy" id="83334"/>
    <lineage>
        <taxon>Bacteria</taxon>
        <taxon>Pseudomonadati</taxon>
        <taxon>Pseudomonadota</taxon>
        <taxon>Gammaproteobacteria</taxon>
        <taxon>Enterobacterales</taxon>
        <taxon>Enterobacteriaceae</taxon>
        <taxon>Escherichia</taxon>
    </lineage>
</organism>
<proteinExistence type="inferred from homology"/>
<comment type="function">
    <text evidence="1">Activates the cell division inhibited by chromosomal DNA over-replication.</text>
</comment>
<comment type="similarity">
    <text evidence="1">Belongs to the CedA family.</text>
</comment>
<comment type="sequence caution" evidence="2">
    <conflict type="erroneous initiation">
        <sequence resource="EMBL-CDS" id="AAG56717"/>
    </conflict>
</comment>
<comment type="sequence caution" evidence="2">
    <conflict type="erroneous initiation">
        <sequence resource="EMBL-CDS" id="BAB35860"/>
    </conflict>
</comment>
<name>CEDA_ECO57</name>